<accession>Q46Z37</accession>
<protein>
    <recommendedName>
        <fullName evidence="1">Glutamate racemase</fullName>
        <ecNumber evidence="1">5.1.1.3</ecNumber>
    </recommendedName>
</protein>
<keyword id="KW-0133">Cell shape</keyword>
<keyword id="KW-0961">Cell wall biogenesis/degradation</keyword>
<keyword id="KW-0413">Isomerase</keyword>
<keyword id="KW-0573">Peptidoglycan synthesis</keyword>
<feature type="chain" id="PRO_1000047600" description="Glutamate racemase">
    <location>
        <begin position="1"/>
        <end position="272"/>
    </location>
</feature>
<feature type="active site" description="Proton donor/acceptor" evidence="1">
    <location>
        <position position="76"/>
    </location>
</feature>
<feature type="active site" description="Proton donor/acceptor" evidence="1">
    <location>
        <position position="186"/>
    </location>
</feature>
<feature type="binding site" evidence="1">
    <location>
        <begin position="13"/>
        <end position="14"/>
    </location>
    <ligand>
        <name>substrate</name>
    </ligand>
</feature>
<feature type="binding site" evidence="1">
    <location>
        <begin position="45"/>
        <end position="46"/>
    </location>
    <ligand>
        <name>substrate</name>
    </ligand>
</feature>
<feature type="binding site" evidence="1">
    <location>
        <begin position="77"/>
        <end position="78"/>
    </location>
    <ligand>
        <name>substrate</name>
    </ligand>
</feature>
<feature type="binding site" evidence="1">
    <location>
        <begin position="187"/>
        <end position="188"/>
    </location>
    <ligand>
        <name>substrate</name>
    </ligand>
</feature>
<sequence length="272" mass="28759">MPNVNPAPIGVFDSGLGGLSVLREIRALLPHESLLYLADSKYAPYGEKPEAFVQARTLQACEWLLAQGCKALVIACNTATGHAVELLRQTLPVPIIGVEPGLKPAAAASQSKVVGVLATANTLKSGKFARLLASLDGESRFICEAGLGLVPLIEQGDIDGPDIRGRLDNYLTPMLEAGADTLVLGCTHYPFLSDTIRDMVGNQLTLVDTGSAIARQLARKLVEHDLAVAPGAVPQDRFVSTKDAAHLRQMAAALLHIETQAETVAIEPAPAF</sequence>
<gene>
    <name evidence="1" type="primary">murI</name>
    <name type="ordered locus">Reut_A2233</name>
</gene>
<evidence type="ECO:0000255" key="1">
    <source>
        <dbReference type="HAMAP-Rule" id="MF_00258"/>
    </source>
</evidence>
<proteinExistence type="inferred from homology"/>
<dbReference type="EC" id="5.1.1.3" evidence="1"/>
<dbReference type="EMBL" id="CP000090">
    <property type="protein sequence ID" value="AAZ61596.1"/>
    <property type="molecule type" value="Genomic_DNA"/>
</dbReference>
<dbReference type="SMR" id="Q46Z37"/>
<dbReference type="STRING" id="264198.Reut_A2233"/>
<dbReference type="KEGG" id="reu:Reut_A2233"/>
<dbReference type="eggNOG" id="COG0796">
    <property type="taxonomic scope" value="Bacteria"/>
</dbReference>
<dbReference type="HOGENOM" id="CLU_052344_2_1_4"/>
<dbReference type="UniPathway" id="UPA00219"/>
<dbReference type="GO" id="GO:0008881">
    <property type="term" value="F:glutamate racemase activity"/>
    <property type="evidence" value="ECO:0007669"/>
    <property type="project" value="UniProtKB-UniRule"/>
</dbReference>
<dbReference type="GO" id="GO:0071555">
    <property type="term" value="P:cell wall organization"/>
    <property type="evidence" value="ECO:0007669"/>
    <property type="project" value="UniProtKB-KW"/>
</dbReference>
<dbReference type="GO" id="GO:0009252">
    <property type="term" value="P:peptidoglycan biosynthetic process"/>
    <property type="evidence" value="ECO:0007669"/>
    <property type="project" value="UniProtKB-UniRule"/>
</dbReference>
<dbReference type="GO" id="GO:0008360">
    <property type="term" value="P:regulation of cell shape"/>
    <property type="evidence" value="ECO:0007669"/>
    <property type="project" value="UniProtKB-KW"/>
</dbReference>
<dbReference type="FunFam" id="3.40.50.1860:FF:000001">
    <property type="entry name" value="Glutamate racemase"/>
    <property type="match status" value="1"/>
</dbReference>
<dbReference type="Gene3D" id="3.40.50.1860">
    <property type="match status" value="2"/>
</dbReference>
<dbReference type="HAMAP" id="MF_00258">
    <property type="entry name" value="Glu_racemase"/>
    <property type="match status" value="1"/>
</dbReference>
<dbReference type="InterPro" id="IPR015942">
    <property type="entry name" value="Asp/Glu/hydantoin_racemase"/>
</dbReference>
<dbReference type="InterPro" id="IPR001920">
    <property type="entry name" value="Asp/Glu_race"/>
</dbReference>
<dbReference type="InterPro" id="IPR033134">
    <property type="entry name" value="Asp/Glu_racemase_AS_2"/>
</dbReference>
<dbReference type="InterPro" id="IPR004391">
    <property type="entry name" value="Glu_race"/>
</dbReference>
<dbReference type="NCBIfam" id="TIGR00067">
    <property type="entry name" value="glut_race"/>
    <property type="match status" value="1"/>
</dbReference>
<dbReference type="PANTHER" id="PTHR21198">
    <property type="entry name" value="GLUTAMATE RACEMASE"/>
    <property type="match status" value="1"/>
</dbReference>
<dbReference type="PANTHER" id="PTHR21198:SF2">
    <property type="entry name" value="GLUTAMATE RACEMASE"/>
    <property type="match status" value="1"/>
</dbReference>
<dbReference type="Pfam" id="PF01177">
    <property type="entry name" value="Asp_Glu_race"/>
    <property type="match status" value="1"/>
</dbReference>
<dbReference type="SUPFAM" id="SSF53681">
    <property type="entry name" value="Aspartate/glutamate racemase"/>
    <property type="match status" value="2"/>
</dbReference>
<dbReference type="PROSITE" id="PS00924">
    <property type="entry name" value="ASP_GLU_RACEMASE_2"/>
    <property type="match status" value="1"/>
</dbReference>
<name>MURI_CUPPJ</name>
<comment type="function">
    <text evidence="1">Provides the (R)-glutamate required for cell wall biosynthesis.</text>
</comment>
<comment type="catalytic activity">
    <reaction evidence="1">
        <text>L-glutamate = D-glutamate</text>
        <dbReference type="Rhea" id="RHEA:12813"/>
        <dbReference type="ChEBI" id="CHEBI:29985"/>
        <dbReference type="ChEBI" id="CHEBI:29986"/>
        <dbReference type="EC" id="5.1.1.3"/>
    </reaction>
</comment>
<comment type="pathway">
    <text evidence="1">Cell wall biogenesis; peptidoglycan biosynthesis.</text>
</comment>
<comment type="similarity">
    <text evidence="1">Belongs to the aspartate/glutamate racemases family.</text>
</comment>
<organism>
    <name type="scientific">Cupriavidus pinatubonensis (strain JMP 134 / LMG 1197)</name>
    <name type="common">Cupriavidus necator (strain JMP 134)</name>
    <dbReference type="NCBI Taxonomy" id="264198"/>
    <lineage>
        <taxon>Bacteria</taxon>
        <taxon>Pseudomonadati</taxon>
        <taxon>Pseudomonadota</taxon>
        <taxon>Betaproteobacteria</taxon>
        <taxon>Burkholderiales</taxon>
        <taxon>Burkholderiaceae</taxon>
        <taxon>Cupriavidus</taxon>
    </lineage>
</organism>
<reference key="1">
    <citation type="journal article" date="2010" name="PLoS ONE">
        <title>The complete multipartite genome sequence of Cupriavidus necator JMP134, a versatile pollutant degrader.</title>
        <authorList>
            <person name="Lykidis A."/>
            <person name="Perez-Pantoja D."/>
            <person name="Ledger T."/>
            <person name="Mavromatis K."/>
            <person name="Anderson I.J."/>
            <person name="Ivanova N.N."/>
            <person name="Hooper S.D."/>
            <person name="Lapidus A."/>
            <person name="Lucas S."/>
            <person name="Gonzalez B."/>
            <person name="Kyrpides N.C."/>
        </authorList>
    </citation>
    <scope>NUCLEOTIDE SEQUENCE [LARGE SCALE GENOMIC DNA]</scope>
    <source>
        <strain>JMP134 / LMG 1197</strain>
    </source>
</reference>